<proteinExistence type="evidence at transcript level"/>
<protein>
    <recommendedName>
        <fullName>Translationally-controlled tumor protein homolog</fullName>
        <shortName>TCTP</shortName>
    </recommendedName>
</protein>
<name>TCTP_AEDAE</name>
<evidence type="ECO:0000250" key="1"/>
<evidence type="ECO:0000255" key="2">
    <source>
        <dbReference type="PROSITE-ProRule" id="PRU01133"/>
    </source>
</evidence>
<sequence length="171" mass="19602">MKIWKDIFTGDEMFSDTYKLKLVDNVMYEVYGKHVSRTLGDVQLDGANPSAEEADEGTDNATESGVDIVLNHRLVETGFADKKQFTTYLKDYMKKLVTRLEENNPSEVEVFKTNINKVMKDLLGRFKDLQFFTGESMDCEGLIAMLEYRDIDGESTPVLLCFKHGLEEEKF</sequence>
<gene>
    <name type="primary">Tctp</name>
    <name type="ORF">AAEL003872</name>
</gene>
<feature type="chain" id="PRO_0000252305" description="Translationally-controlled tumor protein homolog">
    <location>
        <begin position="1"/>
        <end position="171"/>
    </location>
</feature>
<feature type="domain" description="TCTP" evidence="2">
    <location>
        <begin position="1"/>
        <end position="171"/>
    </location>
</feature>
<keyword id="KW-0106">Calcium</keyword>
<keyword id="KW-0963">Cytoplasm</keyword>
<keyword id="KW-1185">Reference proteome</keyword>
<accession>Q1HR79</accession>
<dbReference type="EMBL" id="DQ440215">
    <property type="protein sequence ID" value="ABF18248.1"/>
    <property type="molecule type" value="mRNA"/>
</dbReference>
<dbReference type="EMBL" id="CH477284">
    <property type="protein sequence ID" value="EAT44795.1"/>
    <property type="molecule type" value="Genomic_DNA"/>
</dbReference>
<dbReference type="SMR" id="Q1HR79"/>
<dbReference type="FunCoup" id="Q1HR79">
    <property type="interactions" value="1428"/>
</dbReference>
<dbReference type="STRING" id="7159.Q1HR79"/>
<dbReference type="PaxDb" id="7159-AAEL003872-PA"/>
<dbReference type="EnsemblMetazoa" id="AAEL003872-RA">
    <property type="protein sequence ID" value="AAEL003872-PA"/>
    <property type="gene ID" value="AAEL003872"/>
</dbReference>
<dbReference type="GeneID" id="5579186"/>
<dbReference type="KEGG" id="aag:5579186"/>
<dbReference type="CTD" id="41341"/>
<dbReference type="VEuPathDB" id="VectorBase:AAEL003872"/>
<dbReference type="eggNOG" id="KOG1727">
    <property type="taxonomic scope" value="Eukaryota"/>
</dbReference>
<dbReference type="HOGENOM" id="CLU_095877_0_1_1"/>
<dbReference type="InParanoid" id="Q1HR79"/>
<dbReference type="OMA" id="PYATVWA"/>
<dbReference type="OrthoDB" id="10248936at2759"/>
<dbReference type="PhylomeDB" id="Q1HR79"/>
<dbReference type="Proteomes" id="UP000008820">
    <property type="component" value="Chromosome 3"/>
</dbReference>
<dbReference type="Proteomes" id="UP000682892">
    <property type="component" value="Chromosome 3"/>
</dbReference>
<dbReference type="GO" id="GO:0005737">
    <property type="term" value="C:cytoplasm"/>
    <property type="evidence" value="ECO:0007669"/>
    <property type="project" value="UniProtKB-SubCell"/>
</dbReference>
<dbReference type="GO" id="GO:0005509">
    <property type="term" value="F:calcium ion binding"/>
    <property type="evidence" value="ECO:0007669"/>
    <property type="project" value="TreeGrafter"/>
</dbReference>
<dbReference type="FunFam" id="2.170.150.10:FF:000002">
    <property type="entry name" value="Translationally-controlled tumor protein homolog"/>
    <property type="match status" value="1"/>
</dbReference>
<dbReference type="Gene3D" id="2.170.150.10">
    <property type="entry name" value="Metal Binding Protein, Guanine Nucleotide Exchange Factor, Chain A"/>
    <property type="match status" value="1"/>
</dbReference>
<dbReference type="InterPro" id="IPR011057">
    <property type="entry name" value="Mss4-like_sf"/>
</dbReference>
<dbReference type="InterPro" id="IPR011323">
    <property type="entry name" value="Mss4/transl-control_tumour"/>
</dbReference>
<dbReference type="InterPro" id="IPR034737">
    <property type="entry name" value="TCTP"/>
</dbReference>
<dbReference type="InterPro" id="IPR018103">
    <property type="entry name" value="Translation_control_tumour_CS"/>
</dbReference>
<dbReference type="InterPro" id="IPR018105">
    <property type="entry name" value="Translational_control_tumour_p"/>
</dbReference>
<dbReference type="PANTHER" id="PTHR11991">
    <property type="entry name" value="TRANSLATIONALLY CONTROLLED TUMOR PROTEIN-RELATED"/>
    <property type="match status" value="1"/>
</dbReference>
<dbReference type="PANTHER" id="PTHR11991:SF0">
    <property type="entry name" value="TRANSLATIONALLY-CONTROLLED TUMOR PROTEIN"/>
    <property type="match status" value="1"/>
</dbReference>
<dbReference type="Pfam" id="PF00838">
    <property type="entry name" value="TCTP"/>
    <property type="match status" value="1"/>
</dbReference>
<dbReference type="PRINTS" id="PR01653">
    <property type="entry name" value="TCTPROTEIN"/>
</dbReference>
<dbReference type="SUPFAM" id="SSF51316">
    <property type="entry name" value="Mss4-like"/>
    <property type="match status" value="1"/>
</dbReference>
<dbReference type="PROSITE" id="PS01002">
    <property type="entry name" value="TCTP_1"/>
    <property type="match status" value="1"/>
</dbReference>
<dbReference type="PROSITE" id="PS01003">
    <property type="entry name" value="TCTP_2"/>
    <property type="match status" value="1"/>
</dbReference>
<dbReference type="PROSITE" id="PS51797">
    <property type="entry name" value="TCTP_3"/>
    <property type="match status" value="1"/>
</dbReference>
<comment type="function">
    <text evidence="1">Involved in calcium binding and microtubule stabilization.</text>
</comment>
<comment type="subcellular location">
    <subcellularLocation>
        <location evidence="1">Cytoplasm</location>
    </subcellularLocation>
</comment>
<comment type="similarity">
    <text evidence="2">Belongs to the TCTP family.</text>
</comment>
<organism>
    <name type="scientific">Aedes aegypti</name>
    <name type="common">Yellowfever mosquito</name>
    <name type="synonym">Culex aegypti</name>
    <dbReference type="NCBI Taxonomy" id="7159"/>
    <lineage>
        <taxon>Eukaryota</taxon>
        <taxon>Metazoa</taxon>
        <taxon>Ecdysozoa</taxon>
        <taxon>Arthropoda</taxon>
        <taxon>Hexapoda</taxon>
        <taxon>Insecta</taxon>
        <taxon>Pterygota</taxon>
        <taxon>Neoptera</taxon>
        <taxon>Endopterygota</taxon>
        <taxon>Diptera</taxon>
        <taxon>Nematocera</taxon>
        <taxon>Culicoidea</taxon>
        <taxon>Culicidae</taxon>
        <taxon>Culicinae</taxon>
        <taxon>Aedini</taxon>
        <taxon>Aedes</taxon>
        <taxon>Stegomyia</taxon>
    </lineage>
</organism>
<reference key="1">
    <citation type="journal article" date="2007" name="BMC Genomics">
        <title>An annotated catalogue of salivary gland transcripts in the adult female mosquito, Aedes aegypti.</title>
        <authorList>
            <person name="Ribeiro J.M.C."/>
            <person name="Arca B."/>
            <person name="Lombardo F."/>
            <person name="Calvo E."/>
            <person name="Phan V.M."/>
            <person name="Chandra P.K."/>
            <person name="Wikel S.K."/>
        </authorList>
    </citation>
    <scope>NUCLEOTIDE SEQUENCE [LARGE SCALE MRNA]</scope>
    <source>
        <strain>Black-eyed Liverpool</strain>
        <tissue>Salivary gland</tissue>
    </source>
</reference>
<reference key="2">
    <citation type="journal article" date="2007" name="Science">
        <title>Genome sequence of Aedes aegypti, a major arbovirus vector.</title>
        <authorList>
            <person name="Nene V."/>
            <person name="Wortman J.R."/>
            <person name="Lawson D."/>
            <person name="Haas B.J."/>
            <person name="Kodira C.D."/>
            <person name="Tu Z.J."/>
            <person name="Loftus B.J."/>
            <person name="Xi Z."/>
            <person name="Megy K."/>
            <person name="Grabherr M."/>
            <person name="Ren Q."/>
            <person name="Zdobnov E.M."/>
            <person name="Lobo N.F."/>
            <person name="Campbell K.S."/>
            <person name="Brown S.E."/>
            <person name="Bonaldo M.F."/>
            <person name="Zhu J."/>
            <person name="Sinkins S.P."/>
            <person name="Hogenkamp D.G."/>
            <person name="Amedeo P."/>
            <person name="Arensburger P."/>
            <person name="Atkinson P.W."/>
            <person name="Bidwell S.L."/>
            <person name="Biedler J."/>
            <person name="Birney E."/>
            <person name="Bruggner R.V."/>
            <person name="Costas J."/>
            <person name="Coy M.R."/>
            <person name="Crabtree J."/>
            <person name="Crawford M."/>
            <person name="DeBruyn B."/>
            <person name="DeCaprio D."/>
            <person name="Eiglmeier K."/>
            <person name="Eisenstadt E."/>
            <person name="El-Dorry H."/>
            <person name="Gelbart W.M."/>
            <person name="Gomes S.L."/>
            <person name="Hammond M."/>
            <person name="Hannick L.I."/>
            <person name="Hogan J.R."/>
            <person name="Holmes M.H."/>
            <person name="Jaffe D."/>
            <person name="Johnston S.J."/>
            <person name="Kennedy R.C."/>
            <person name="Koo H."/>
            <person name="Kravitz S."/>
            <person name="Kriventseva E.V."/>
            <person name="Kulp D."/>
            <person name="Labutti K."/>
            <person name="Lee E."/>
            <person name="Li S."/>
            <person name="Lovin D.D."/>
            <person name="Mao C."/>
            <person name="Mauceli E."/>
            <person name="Menck C.F."/>
            <person name="Miller J.R."/>
            <person name="Montgomery P."/>
            <person name="Mori A."/>
            <person name="Nascimento A.L."/>
            <person name="Naveira H.F."/>
            <person name="Nusbaum C."/>
            <person name="O'Leary S.B."/>
            <person name="Orvis J."/>
            <person name="Pertea M."/>
            <person name="Quesneville H."/>
            <person name="Reidenbach K.R."/>
            <person name="Rogers Y.-H.C."/>
            <person name="Roth C.W."/>
            <person name="Schneider J.R."/>
            <person name="Schatz M."/>
            <person name="Shumway M."/>
            <person name="Stanke M."/>
            <person name="Stinson E.O."/>
            <person name="Tubio J.M.C."/>
            <person name="Vanzee J.P."/>
            <person name="Verjovski-Almeida S."/>
            <person name="Werner D."/>
            <person name="White O.R."/>
            <person name="Wyder S."/>
            <person name="Zeng Q."/>
            <person name="Zhao Q."/>
            <person name="Zhao Y."/>
            <person name="Hill C.A."/>
            <person name="Raikhel A.S."/>
            <person name="Soares M.B."/>
            <person name="Knudson D.L."/>
            <person name="Lee N.H."/>
            <person name="Galagan J."/>
            <person name="Salzberg S.L."/>
            <person name="Paulsen I.T."/>
            <person name="Dimopoulos G."/>
            <person name="Collins F.H."/>
            <person name="Bruce B."/>
            <person name="Fraser-Liggett C.M."/>
            <person name="Severson D.W."/>
        </authorList>
    </citation>
    <scope>NUCLEOTIDE SEQUENCE [LARGE SCALE GENOMIC DNA]</scope>
    <source>
        <strain>LVPib12</strain>
    </source>
</reference>